<gene>
    <name type="primary">ompW</name>
    <name type="ordered locus">VC_A0867</name>
</gene>
<keyword id="KW-0998">Cell outer membrane</keyword>
<keyword id="KW-0472">Membrane</keyword>
<keyword id="KW-1185">Reference proteome</keyword>
<keyword id="KW-0732">Signal</keyword>
<keyword id="KW-0812">Transmembrane</keyword>
<keyword id="KW-1134">Transmembrane beta strand</keyword>
<accession>P17266</accession>
<accession>Q9KL80</accession>
<protein>
    <recommendedName>
        <fullName>Outer membrane protein W</fullName>
    </recommendedName>
</protein>
<reference key="1">
    <citation type="journal article" date="1990" name="Nucleic Acids Res.">
        <title>Nucleotide sequence of the gene, ompW, encoding a 22kDa immunogenic outer membrane protein of Vibrio cholerae.</title>
        <authorList>
            <person name="Jalajakumari M.B."/>
            <person name="Manning P.A."/>
        </authorList>
    </citation>
    <scope>NUCLEOTIDE SEQUENCE [GENOMIC DNA]</scope>
</reference>
<reference key="2">
    <citation type="journal article" date="2000" name="Nature">
        <title>DNA sequence of both chromosomes of the cholera pathogen Vibrio cholerae.</title>
        <authorList>
            <person name="Heidelberg J.F."/>
            <person name="Eisen J.A."/>
            <person name="Nelson W.C."/>
            <person name="Clayton R.A."/>
            <person name="Gwinn M.L."/>
            <person name="Dodson R.J."/>
            <person name="Haft D.H."/>
            <person name="Hickey E.K."/>
            <person name="Peterson J.D."/>
            <person name="Umayam L.A."/>
            <person name="Gill S.R."/>
            <person name="Nelson K.E."/>
            <person name="Read T.D."/>
            <person name="Tettelin H."/>
            <person name="Richardson D.L."/>
            <person name="Ermolaeva M.D."/>
            <person name="Vamathevan J.J."/>
            <person name="Bass S."/>
            <person name="Qin H."/>
            <person name="Dragoi I."/>
            <person name="Sellers P."/>
            <person name="McDonald L.A."/>
            <person name="Utterback T.R."/>
            <person name="Fleischmann R.D."/>
            <person name="Nierman W.C."/>
            <person name="White O."/>
            <person name="Salzberg S.L."/>
            <person name="Smith H.O."/>
            <person name="Colwell R.R."/>
            <person name="Mekalanos J.J."/>
            <person name="Venter J.C."/>
            <person name="Fraser C.M."/>
        </authorList>
    </citation>
    <scope>NUCLEOTIDE SEQUENCE [LARGE SCALE GENOMIC DNA]</scope>
    <source>
        <strain>ATCC 39315 / El Tor Inaba N16961</strain>
    </source>
</reference>
<comment type="subcellular location">
    <subcellularLocation>
        <location>Cell outer membrane</location>
    </subcellularLocation>
</comment>
<comment type="similarity">
    <text evidence="1">Belongs to the OmpW/AlkL family.</text>
</comment>
<proteinExistence type="inferred from homology"/>
<organism>
    <name type="scientific">Vibrio cholerae serotype O1 (strain ATCC 39315 / El Tor Inaba N16961)</name>
    <dbReference type="NCBI Taxonomy" id="243277"/>
    <lineage>
        <taxon>Bacteria</taxon>
        <taxon>Pseudomonadati</taxon>
        <taxon>Pseudomonadota</taxon>
        <taxon>Gammaproteobacteria</taxon>
        <taxon>Vibrionales</taxon>
        <taxon>Vibrionaceae</taxon>
        <taxon>Vibrio</taxon>
    </lineage>
</organism>
<evidence type="ECO:0000305" key="1"/>
<sequence length="217" mass="23316">MKQTICGLAVLAALSSAPVFAHQEGDFIVRAGIASVVPNDSSDKVLNTQSELAVNSNTQLGLTLGYMFTDNISFEVLAATPFSHKISTSGGELGSLGDIGETKHLPPTFMVQYYFGEANSTFRPYVGAGLNYTTFFDESFNGTGTNAGLSDLKLDDSWGLAANVGFDYMLNDSWFLNASVWYANIETTATYKAGADAKSTDVEINPWVFMIAGGYKF</sequence>
<feature type="signal peptide">
    <location>
        <begin position="1"/>
        <end position="21"/>
    </location>
</feature>
<feature type="chain" id="PRO_0000020194" description="Outer membrane protein W">
    <location>
        <begin position="22"/>
        <end position="217"/>
    </location>
</feature>
<feature type="sequence conflict" description="In Ref. 1; CAA36210." evidence="1" ref="1">
    <location>
        <position position="7"/>
    </location>
</feature>
<feature type="sequence conflict" description="In Ref. 1; CAA36210." evidence="1" ref="1">
    <original>SS</original>
    <variation>LA</variation>
    <location>
        <begin position="15"/>
        <end position="16"/>
    </location>
</feature>
<feature type="sequence conflict" description="In Ref. 1; CAA36210." evidence="1" ref="1">
    <original>Q</original>
    <variation>H</variation>
    <location>
        <position position="59"/>
    </location>
</feature>
<feature type="sequence conflict" description="In Ref. 1; CAA36210." evidence="1" ref="1">
    <original>A</original>
    <variation>R</variation>
    <location>
        <position position="79"/>
    </location>
</feature>
<feature type="sequence conflict" description="In Ref. 1; CAA36210." evidence="1" ref="1">
    <original>F</original>
    <variation>N</variation>
    <location>
        <position position="122"/>
    </location>
</feature>
<feature type="sequence conflict" description="In Ref. 1; CAA36210." evidence="1" ref="1">
    <original>G</original>
    <variation>S</variation>
    <location>
        <position position="142"/>
    </location>
</feature>
<feature type="sequence conflict" description="In Ref. 1; CAA36210." evidence="1" ref="1">
    <original>AG</original>
    <variation>NA</variation>
    <location>
        <begin position="147"/>
        <end position="148"/>
    </location>
</feature>
<feature type="sequence conflict" description="In Ref. 1; CAA36210." evidence="1" ref="1">
    <original>S</original>
    <variation>Y</variation>
    <location>
        <position position="179"/>
    </location>
</feature>
<feature type="sequence conflict" description="In Ref. 1; CAA36210." evidence="1" ref="1">
    <original>M</original>
    <variation>I</variation>
    <location>
        <position position="210"/>
    </location>
</feature>
<dbReference type="EMBL" id="X51948">
    <property type="protein sequence ID" value="CAA36210.1"/>
    <property type="molecule type" value="Genomic_DNA"/>
</dbReference>
<dbReference type="EMBL" id="AE003853">
    <property type="protein sequence ID" value="AAF96765.1"/>
    <property type="molecule type" value="Genomic_DNA"/>
</dbReference>
<dbReference type="PIR" id="D82407">
    <property type="entry name" value="D82407"/>
</dbReference>
<dbReference type="PIR" id="S09509">
    <property type="entry name" value="S09509"/>
</dbReference>
<dbReference type="RefSeq" id="NP_233253.1">
    <property type="nucleotide sequence ID" value="NC_002506.1"/>
</dbReference>
<dbReference type="RefSeq" id="WP_000814590.1">
    <property type="nucleotide sequence ID" value="NZ_LT906615.1"/>
</dbReference>
<dbReference type="SMR" id="P17266"/>
<dbReference type="STRING" id="243277.VC_A0867"/>
<dbReference type="DNASU" id="2612873"/>
<dbReference type="EnsemblBacteria" id="AAF96765">
    <property type="protein sequence ID" value="AAF96765"/>
    <property type="gene ID" value="VC_A0867"/>
</dbReference>
<dbReference type="KEGG" id="vch:VC_A0867"/>
<dbReference type="PATRIC" id="fig|243277.26.peg.3483"/>
<dbReference type="eggNOG" id="COG3047">
    <property type="taxonomic scope" value="Bacteria"/>
</dbReference>
<dbReference type="HOGENOM" id="CLU_042505_1_1_6"/>
<dbReference type="Proteomes" id="UP000000584">
    <property type="component" value="Chromosome 2"/>
</dbReference>
<dbReference type="GO" id="GO:0009279">
    <property type="term" value="C:cell outer membrane"/>
    <property type="evidence" value="ECO:0007669"/>
    <property type="project" value="UniProtKB-SubCell"/>
</dbReference>
<dbReference type="GO" id="GO:0016020">
    <property type="term" value="C:membrane"/>
    <property type="evidence" value="ECO:0000318"/>
    <property type="project" value="GO_Central"/>
</dbReference>
<dbReference type="GO" id="GO:0055085">
    <property type="term" value="P:transmembrane transport"/>
    <property type="evidence" value="ECO:0000318"/>
    <property type="project" value="GO_Central"/>
</dbReference>
<dbReference type="FunFam" id="2.40.160.20:FF:000001">
    <property type="entry name" value="Outer membrane protein W"/>
    <property type="match status" value="1"/>
</dbReference>
<dbReference type="Gene3D" id="2.40.160.20">
    <property type="match status" value="1"/>
</dbReference>
<dbReference type="InterPro" id="IPR011250">
    <property type="entry name" value="OMP/PagP_b-brl"/>
</dbReference>
<dbReference type="InterPro" id="IPR005618">
    <property type="entry name" value="OMPW"/>
</dbReference>
<dbReference type="NCBIfam" id="NF008202">
    <property type="entry name" value="PRK10959.1"/>
    <property type="match status" value="1"/>
</dbReference>
<dbReference type="PANTHER" id="PTHR36920">
    <property type="match status" value="1"/>
</dbReference>
<dbReference type="PANTHER" id="PTHR36920:SF1">
    <property type="entry name" value="OUTER MEMBRANE PROTEIN W"/>
    <property type="match status" value="1"/>
</dbReference>
<dbReference type="Pfam" id="PF03922">
    <property type="entry name" value="OmpW"/>
    <property type="match status" value="1"/>
</dbReference>
<dbReference type="SUPFAM" id="SSF56925">
    <property type="entry name" value="OMPA-like"/>
    <property type="match status" value="1"/>
</dbReference>
<name>OMPW_VIBCH</name>